<feature type="chain" id="PRO_0000136698" description="Tryptophan--tRNA ligase">
    <location>
        <begin position="1"/>
        <end position="337"/>
    </location>
</feature>
<feature type="short sequence motif" description="'HIGH' region" evidence="1">
    <location>
        <begin position="12"/>
        <end position="20"/>
    </location>
</feature>
<feature type="short sequence motif" description="'KMSKS' region" evidence="1">
    <location>
        <begin position="199"/>
        <end position="203"/>
    </location>
</feature>
<feature type="binding site" evidence="1">
    <location>
        <begin position="11"/>
        <end position="13"/>
    </location>
    <ligand>
        <name>ATP</name>
        <dbReference type="ChEBI" id="CHEBI:30616"/>
    </ligand>
</feature>
<feature type="binding site" evidence="1">
    <location>
        <begin position="19"/>
        <end position="20"/>
    </location>
    <ligand>
        <name>ATP</name>
        <dbReference type="ChEBI" id="CHEBI:30616"/>
    </ligand>
</feature>
<feature type="binding site" evidence="1">
    <location>
        <position position="135"/>
    </location>
    <ligand>
        <name>L-tryptophan</name>
        <dbReference type="ChEBI" id="CHEBI:57912"/>
    </ligand>
</feature>
<feature type="binding site" evidence="1">
    <location>
        <begin position="147"/>
        <end position="149"/>
    </location>
    <ligand>
        <name>ATP</name>
        <dbReference type="ChEBI" id="CHEBI:30616"/>
    </ligand>
</feature>
<feature type="binding site" evidence="1">
    <location>
        <position position="190"/>
    </location>
    <ligand>
        <name>ATP</name>
        <dbReference type="ChEBI" id="CHEBI:30616"/>
    </ligand>
</feature>
<feature type="binding site" evidence="1">
    <location>
        <begin position="199"/>
        <end position="203"/>
    </location>
    <ligand>
        <name>ATP</name>
        <dbReference type="ChEBI" id="CHEBI:30616"/>
    </ligand>
</feature>
<accession>P73655</accession>
<gene>
    <name evidence="1" type="primary">trpS</name>
    <name type="ordered locus">slr1884</name>
</gene>
<dbReference type="EC" id="6.1.1.2" evidence="1"/>
<dbReference type="EMBL" id="BA000022">
    <property type="protein sequence ID" value="BAA17700.1"/>
    <property type="status" value="ALT_INIT"/>
    <property type="molecule type" value="Genomic_DNA"/>
</dbReference>
<dbReference type="PIR" id="S77142">
    <property type="entry name" value="S77142"/>
</dbReference>
<dbReference type="SMR" id="P73655"/>
<dbReference type="FunCoup" id="P73655">
    <property type="interactions" value="425"/>
</dbReference>
<dbReference type="STRING" id="1148.gene:10498567"/>
<dbReference type="PaxDb" id="1148-1652781"/>
<dbReference type="EnsemblBacteria" id="BAA17700">
    <property type="protein sequence ID" value="BAA17700"/>
    <property type="gene ID" value="BAA17700"/>
</dbReference>
<dbReference type="KEGG" id="syn:slr1884"/>
<dbReference type="eggNOG" id="COG0180">
    <property type="taxonomic scope" value="Bacteria"/>
</dbReference>
<dbReference type="InParanoid" id="P73655"/>
<dbReference type="PhylomeDB" id="P73655"/>
<dbReference type="Proteomes" id="UP000001425">
    <property type="component" value="Chromosome"/>
</dbReference>
<dbReference type="GO" id="GO:0005737">
    <property type="term" value="C:cytoplasm"/>
    <property type="evidence" value="ECO:0007669"/>
    <property type="project" value="UniProtKB-SubCell"/>
</dbReference>
<dbReference type="GO" id="GO:0005524">
    <property type="term" value="F:ATP binding"/>
    <property type="evidence" value="ECO:0007669"/>
    <property type="project" value="UniProtKB-UniRule"/>
</dbReference>
<dbReference type="GO" id="GO:0004830">
    <property type="term" value="F:tryptophan-tRNA ligase activity"/>
    <property type="evidence" value="ECO:0000318"/>
    <property type="project" value="GO_Central"/>
</dbReference>
<dbReference type="GO" id="GO:0006436">
    <property type="term" value="P:tryptophanyl-tRNA aminoacylation"/>
    <property type="evidence" value="ECO:0000318"/>
    <property type="project" value="GO_Central"/>
</dbReference>
<dbReference type="CDD" id="cd00806">
    <property type="entry name" value="TrpRS_core"/>
    <property type="match status" value="1"/>
</dbReference>
<dbReference type="FunFam" id="1.10.240.10:FF:000002">
    <property type="entry name" value="Tryptophan--tRNA ligase"/>
    <property type="match status" value="1"/>
</dbReference>
<dbReference type="Gene3D" id="3.40.50.620">
    <property type="entry name" value="HUPs"/>
    <property type="match status" value="1"/>
</dbReference>
<dbReference type="Gene3D" id="1.10.240.10">
    <property type="entry name" value="Tyrosyl-Transfer RNA Synthetase"/>
    <property type="match status" value="1"/>
</dbReference>
<dbReference type="HAMAP" id="MF_00140_B">
    <property type="entry name" value="Trp_tRNA_synth_B"/>
    <property type="match status" value="1"/>
</dbReference>
<dbReference type="InterPro" id="IPR001412">
    <property type="entry name" value="aa-tRNA-synth_I_CS"/>
</dbReference>
<dbReference type="InterPro" id="IPR002305">
    <property type="entry name" value="aa-tRNA-synth_Ic"/>
</dbReference>
<dbReference type="InterPro" id="IPR014729">
    <property type="entry name" value="Rossmann-like_a/b/a_fold"/>
</dbReference>
<dbReference type="InterPro" id="IPR002306">
    <property type="entry name" value="Trp-tRNA-ligase"/>
</dbReference>
<dbReference type="InterPro" id="IPR024109">
    <property type="entry name" value="Trp-tRNA-ligase_bac-type"/>
</dbReference>
<dbReference type="InterPro" id="IPR050203">
    <property type="entry name" value="Trp-tRNA_synthetase"/>
</dbReference>
<dbReference type="NCBIfam" id="TIGR00233">
    <property type="entry name" value="trpS"/>
    <property type="match status" value="1"/>
</dbReference>
<dbReference type="PANTHER" id="PTHR43766">
    <property type="entry name" value="TRYPTOPHAN--TRNA LIGASE, MITOCHONDRIAL"/>
    <property type="match status" value="1"/>
</dbReference>
<dbReference type="PANTHER" id="PTHR43766:SF1">
    <property type="entry name" value="TRYPTOPHAN--TRNA LIGASE, MITOCHONDRIAL"/>
    <property type="match status" value="1"/>
</dbReference>
<dbReference type="Pfam" id="PF00579">
    <property type="entry name" value="tRNA-synt_1b"/>
    <property type="match status" value="1"/>
</dbReference>
<dbReference type="PRINTS" id="PR01039">
    <property type="entry name" value="TRNASYNTHTRP"/>
</dbReference>
<dbReference type="SUPFAM" id="SSF52374">
    <property type="entry name" value="Nucleotidylyl transferase"/>
    <property type="match status" value="1"/>
</dbReference>
<dbReference type="PROSITE" id="PS00178">
    <property type="entry name" value="AA_TRNA_LIGASE_I"/>
    <property type="match status" value="1"/>
</dbReference>
<sequence>MDKPRILSGVQPTGNLHLGNYLGAIRSWVEQQQHYDNFFCVVDLHAITVPHNPQTLAQDTLTIAALYLACGIDLQYSTIFVQSHVAAHSELAWLLNCVTPLNWLERMIQFKEKAVKQGENVSVGLLDYPVLMAADILLYDADKVPVGEDQKQHLELTRDIVIRINDKFGREDAPVLKLPEPLIRKEGARVMSLADGTKKMSKSDESELSRINLLDPPEMIKKKVKKCKTDPQRGLWFDDPERPECHNLLTLYTLLSNQTKEAVAQECAEMGWGQFKPLLTETAIAALEPIQAKYAEILADRGELDRIIQAGNAKASQTAQQTLARVRDALGFLAPPY</sequence>
<comment type="function">
    <text evidence="1">Catalyzes the attachment of tryptophan to tRNA(Trp).</text>
</comment>
<comment type="catalytic activity">
    <reaction evidence="1">
        <text>tRNA(Trp) + L-tryptophan + ATP = L-tryptophyl-tRNA(Trp) + AMP + diphosphate + H(+)</text>
        <dbReference type="Rhea" id="RHEA:24080"/>
        <dbReference type="Rhea" id="RHEA-COMP:9671"/>
        <dbReference type="Rhea" id="RHEA-COMP:9705"/>
        <dbReference type="ChEBI" id="CHEBI:15378"/>
        <dbReference type="ChEBI" id="CHEBI:30616"/>
        <dbReference type="ChEBI" id="CHEBI:33019"/>
        <dbReference type="ChEBI" id="CHEBI:57912"/>
        <dbReference type="ChEBI" id="CHEBI:78442"/>
        <dbReference type="ChEBI" id="CHEBI:78535"/>
        <dbReference type="ChEBI" id="CHEBI:456215"/>
        <dbReference type="EC" id="6.1.1.2"/>
    </reaction>
</comment>
<comment type="subunit">
    <text evidence="1">Homodimer.</text>
</comment>
<comment type="subcellular location">
    <subcellularLocation>
        <location evidence="1">Cytoplasm</location>
    </subcellularLocation>
</comment>
<comment type="similarity">
    <text evidence="1">Belongs to the class-I aminoacyl-tRNA synthetase family.</text>
</comment>
<comment type="sequence caution" evidence="2">
    <conflict type="erroneous initiation">
        <sequence resource="EMBL-CDS" id="BAA17700"/>
    </conflict>
</comment>
<proteinExistence type="inferred from homology"/>
<keyword id="KW-0030">Aminoacyl-tRNA synthetase</keyword>
<keyword id="KW-0067">ATP-binding</keyword>
<keyword id="KW-0963">Cytoplasm</keyword>
<keyword id="KW-0436">Ligase</keyword>
<keyword id="KW-0547">Nucleotide-binding</keyword>
<keyword id="KW-0648">Protein biosynthesis</keyword>
<keyword id="KW-1185">Reference proteome</keyword>
<reference key="1">
    <citation type="journal article" date="1996" name="DNA Res.">
        <title>Sequence analysis of the genome of the unicellular cyanobacterium Synechocystis sp. strain PCC6803. II. Sequence determination of the entire genome and assignment of potential protein-coding regions.</title>
        <authorList>
            <person name="Kaneko T."/>
            <person name="Sato S."/>
            <person name="Kotani H."/>
            <person name="Tanaka A."/>
            <person name="Asamizu E."/>
            <person name="Nakamura Y."/>
            <person name="Miyajima N."/>
            <person name="Hirosawa M."/>
            <person name="Sugiura M."/>
            <person name="Sasamoto S."/>
            <person name="Kimura T."/>
            <person name="Hosouchi T."/>
            <person name="Matsuno A."/>
            <person name="Muraki A."/>
            <person name="Nakazaki N."/>
            <person name="Naruo K."/>
            <person name="Okumura S."/>
            <person name="Shimpo S."/>
            <person name="Takeuchi C."/>
            <person name="Wada T."/>
            <person name="Watanabe A."/>
            <person name="Yamada M."/>
            <person name="Yasuda M."/>
            <person name="Tabata S."/>
        </authorList>
    </citation>
    <scope>NUCLEOTIDE SEQUENCE [LARGE SCALE GENOMIC DNA]</scope>
    <source>
        <strain>ATCC 27184 / PCC 6803 / Kazusa</strain>
    </source>
</reference>
<protein>
    <recommendedName>
        <fullName evidence="1">Tryptophan--tRNA ligase</fullName>
        <ecNumber evidence="1">6.1.1.2</ecNumber>
    </recommendedName>
    <alternativeName>
        <fullName evidence="1">Tryptophanyl-tRNA synthetase</fullName>
        <shortName evidence="1">TrpRS</shortName>
    </alternativeName>
</protein>
<organism>
    <name type="scientific">Synechocystis sp. (strain ATCC 27184 / PCC 6803 / Kazusa)</name>
    <dbReference type="NCBI Taxonomy" id="1111708"/>
    <lineage>
        <taxon>Bacteria</taxon>
        <taxon>Bacillati</taxon>
        <taxon>Cyanobacteriota</taxon>
        <taxon>Cyanophyceae</taxon>
        <taxon>Synechococcales</taxon>
        <taxon>Merismopediaceae</taxon>
        <taxon>Synechocystis</taxon>
    </lineage>
</organism>
<evidence type="ECO:0000255" key="1">
    <source>
        <dbReference type="HAMAP-Rule" id="MF_00140"/>
    </source>
</evidence>
<evidence type="ECO:0000305" key="2"/>
<name>SYW_SYNY3</name>